<organism>
    <name type="scientific">Cupriavidus necator (strain ATCC 17699 / DSM 428 / KCTC 22496 / NCIMB 10442 / H16 / Stanier 337)</name>
    <name type="common">Ralstonia eutropha</name>
    <dbReference type="NCBI Taxonomy" id="381666"/>
    <lineage>
        <taxon>Bacteria</taxon>
        <taxon>Pseudomonadati</taxon>
        <taxon>Pseudomonadota</taxon>
        <taxon>Betaproteobacteria</taxon>
        <taxon>Burkholderiales</taxon>
        <taxon>Burkholderiaceae</taxon>
        <taxon>Cupriavidus</taxon>
    </lineage>
</organism>
<name>Y3579_CUPNH</name>
<proteinExistence type="inferred from homology"/>
<dbReference type="EMBL" id="AM260479">
    <property type="protein sequence ID" value="CAJ94637.1"/>
    <property type="molecule type" value="Genomic_DNA"/>
</dbReference>
<dbReference type="RefSeq" id="WP_010812128.1">
    <property type="nucleotide sequence ID" value="NZ_CP039287.1"/>
</dbReference>
<dbReference type="SMR" id="Q0K5T4"/>
<dbReference type="STRING" id="381666.H16_A3579"/>
<dbReference type="KEGG" id="reh:H16_A3579"/>
<dbReference type="eggNOG" id="COG0792">
    <property type="taxonomic scope" value="Bacteria"/>
</dbReference>
<dbReference type="HOGENOM" id="CLU_115353_1_0_4"/>
<dbReference type="OrthoDB" id="9794876at2"/>
<dbReference type="Proteomes" id="UP000008210">
    <property type="component" value="Chromosome 1"/>
</dbReference>
<dbReference type="GO" id="GO:0003676">
    <property type="term" value="F:nucleic acid binding"/>
    <property type="evidence" value="ECO:0007669"/>
    <property type="project" value="InterPro"/>
</dbReference>
<dbReference type="CDD" id="cd20736">
    <property type="entry name" value="PoNe_Nuclease"/>
    <property type="match status" value="1"/>
</dbReference>
<dbReference type="Gene3D" id="3.40.1350.10">
    <property type="match status" value="1"/>
</dbReference>
<dbReference type="HAMAP" id="MF_00048">
    <property type="entry name" value="UPF0102"/>
    <property type="match status" value="1"/>
</dbReference>
<dbReference type="InterPro" id="IPR011335">
    <property type="entry name" value="Restrct_endonuc-II-like"/>
</dbReference>
<dbReference type="InterPro" id="IPR011856">
    <property type="entry name" value="tRNA_endonuc-like_dom_sf"/>
</dbReference>
<dbReference type="InterPro" id="IPR003509">
    <property type="entry name" value="UPF0102_YraN-like"/>
</dbReference>
<dbReference type="NCBIfam" id="NF009150">
    <property type="entry name" value="PRK12497.1-3"/>
    <property type="match status" value="1"/>
</dbReference>
<dbReference type="NCBIfam" id="TIGR00252">
    <property type="entry name" value="YraN family protein"/>
    <property type="match status" value="1"/>
</dbReference>
<dbReference type="PANTHER" id="PTHR34039">
    <property type="entry name" value="UPF0102 PROTEIN YRAN"/>
    <property type="match status" value="1"/>
</dbReference>
<dbReference type="PANTHER" id="PTHR34039:SF1">
    <property type="entry name" value="UPF0102 PROTEIN YRAN"/>
    <property type="match status" value="1"/>
</dbReference>
<dbReference type="Pfam" id="PF02021">
    <property type="entry name" value="UPF0102"/>
    <property type="match status" value="1"/>
</dbReference>
<dbReference type="SUPFAM" id="SSF52980">
    <property type="entry name" value="Restriction endonuclease-like"/>
    <property type="match status" value="1"/>
</dbReference>
<feature type="chain" id="PRO_1000009247" description="UPF0102 protein H16_A3579">
    <location>
        <begin position="1"/>
        <end position="131"/>
    </location>
</feature>
<comment type="similarity">
    <text evidence="1">Belongs to the UPF0102 family.</text>
</comment>
<gene>
    <name type="ordered locus">H16_A3579</name>
</gene>
<sequence>MPSFKSTTQLQNTQLRGAQAEDRALAHLRRQGLEPVVRNYRCKGGEIDLVMRAPDGTLVFVEVRQRSGRGFGGAAASVTPAKQRRVLLAAAHYLATLAQVPPCRFDVVALEPGRLDWLQHAFDQDAAGAGS</sequence>
<accession>Q0K5T4</accession>
<protein>
    <recommendedName>
        <fullName evidence="1">UPF0102 protein H16_A3579</fullName>
    </recommendedName>
</protein>
<evidence type="ECO:0000255" key="1">
    <source>
        <dbReference type="HAMAP-Rule" id="MF_00048"/>
    </source>
</evidence>
<keyword id="KW-1185">Reference proteome</keyword>
<reference key="1">
    <citation type="journal article" date="2006" name="Nat. Biotechnol.">
        <title>Genome sequence of the bioplastic-producing 'Knallgas' bacterium Ralstonia eutropha H16.</title>
        <authorList>
            <person name="Pohlmann A."/>
            <person name="Fricke W.F."/>
            <person name="Reinecke F."/>
            <person name="Kusian B."/>
            <person name="Liesegang H."/>
            <person name="Cramm R."/>
            <person name="Eitinger T."/>
            <person name="Ewering C."/>
            <person name="Poetter M."/>
            <person name="Schwartz E."/>
            <person name="Strittmatter A."/>
            <person name="Voss I."/>
            <person name="Gottschalk G."/>
            <person name="Steinbuechel A."/>
            <person name="Friedrich B."/>
            <person name="Bowien B."/>
        </authorList>
    </citation>
    <scope>NUCLEOTIDE SEQUENCE [LARGE SCALE GENOMIC DNA]</scope>
    <source>
        <strain>ATCC 17699 / DSM 428 / KCTC 22496 / NCIMB 10442 / H16 / Stanier 337</strain>
    </source>
</reference>